<name>KBAZ_ECO45</name>
<dbReference type="EMBL" id="CU928161">
    <property type="protein sequence ID" value="CAR04746.1"/>
    <property type="molecule type" value="Genomic_DNA"/>
</dbReference>
<dbReference type="RefSeq" id="WP_000681931.1">
    <property type="nucleotide sequence ID" value="NC_011742.1"/>
</dbReference>
<dbReference type="SMR" id="B7MB55"/>
<dbReference type="KEGG" id="ecz:ECS88_3518"/>
<dbReference type="HOGENOM" id="CLU_053334_0_0_6"/>
<dbReference type="UniPathway" id="UPA00704">
    <property type="reaction ID" value="UER00716"/>
</dbReference>
<dbReference type="Proteomes" id="UP000000747">
    <property type="component" value="Chromosome"/>
</dbReference>
<dbReference type="GO" id="GO:0005886">
    <property type="term" value="C:plasma membrane"/>
    <property type="evidence" value="ECO:0007669"/>
    <property type="project" value="TreeGrafter"/>
</dbReference>
<dbReference type="GO" id="GO:0005975">
    <property type="term" value="P:carbohydrate metabolic process"/>
    <property type="evidence" value="ECO:0007669"/>
    <property type="project" value="InterPro"/>
</dbReference>
<dbReference type="GO" id="GO:2001059">
    <property type="term" value="P:D-tagatose 6-phosphate catabolic process"/>
    <property type="evidence" value="ECO:0007669"/>
    <property type="project" value="UniProtKB-UniRule"/>
</dbReference>
<dbReference type="GO" id="GO:0009401">
    <property type="term" value="P:phosphoenolpyruvate-dependent sugar phosphotransferase system"/>
    <property type="evidence" value="ECO:0007669"/>
    <property type="project" value="TreeGrafter"/>
</dbReference>
<dbReference type="FunFam" id="3.20.20.70:FF:000141">
    <property type="entry name" value="D-tagatose-1,6-bisphosphate aldolase subunit GatZ"/>
    <property type="match status" value="1"/>
</dbReference>
<dbReference type="Gene3D" id="3.20.20.70">
    <property type="entry name" value="Aldolase class I"/>
    <property type="match status" value="1"/>
</dbReference>
<dbReference type="Gene3D" id="1.10.400.20">
    <property type="entry name" value="putative tagatose 6-phosphate kinase domain like"/>
    <property type="match status" value="1"/>
</dbReference>
<dbReference type="HAMAP" id="MF_01295">
    <property type="entry name" value="Tagatose_aldol_KbaZ"/>
    <property type="match status" value="1"/>
</dbReference>
<dbReference type="InterPro" id="IPR013785">
    <property type="entry name" value="Aldolase_TIM"/>
</dbReference>
<dbReference type="InterPro" id="IPR012062">
    <property type="entry name" value="GatZ/KbaZ-like"/>
</dbReference>
<dbReference type="InterPro" id="IPR050303">
    <property type="entry name" value="GatZ_KbaZ_carbometab"/>
</dbReference>
<dbReference type="InterPro" id="IPR023435">
    <property type="entry name" value="TagBP_ald_KbaZ"/>
</dbReference>
<dbReference type="NCBIfam" id="TIGR02810">
    <property type="entry name" value="agaZ_gatZ"/>
    <property type="match status" value="1"/>
</dbReference>
<dbReference type="NCBIfam" id="NF012002">
    <property type="entry name" value="PRK15458.1"/>
    <property type="match status" value="1"/>
</dbReference>
<dbReference type="PANTHER" id="PTHR32502:SF2">
    <property type="entry name" value="D-TAGATOSE-1,6-BISPHOSPHATE ALDOLASE SUBUNIT KBAZ"/>
    <property type="match status" value="1"/>
</dbReference>
<dbReference type="PANTHER" id="PTHR32502">
    <property type="entry name" value="N-ACETYLGALACTOSAMINE PERMEASE II COMPONENT-RELATED"/>
    <property type="match status" value="1"/>
</dbReference>
<dbReference type="Pfam" id="PF08013">
    <property type="entry name" value="GatZ_KbaZ-like"/>
    <property type="match status" value="1"/>
</dbReference>
<dbReference type="PIRSF" id="PIRSF009264">
    <property type="entry name" value="TagBP_ald_AgaZ"/>
    <property type="match status" value="1"/>
</dbReference>
<dbReference type="SUPFAM" id="SSF51569">
    <property type="entry name" value="Aldolase"/>
    <property type="match status" value="1"/>
</dbReference>
<accession>B7MB55</accession>
<organism>
    <name type="scientific">Escherichia coli O45:K1 (strain S88 / ExPEC)</name>
    <dbReference type="NCBI Taxonomy" id="585035"/>
    <lineage>
        <taxon>Bacteria</taxon>
        <taxon>Pseudomonadati</taxon>
        <taxon>Pseudomonadota</taxon>
        <taxon>Gammaproteobacteria</taxon>
        <taxon>Enterobacterales</taxon>
        <taxon>Enterobacteriaceae</taxon>
        <taxon>Escherichia</taxon>
    </lineage>
</organism>
<reference key="1">
    <citation type="journal article" date="2009" name="PLoS Genet.">
        <title>Organised genome dynamics in the Escherichia coli species results in highly diverse adaptive paths.</title>
        <authorList>
            <person name="Touchon M."/>
            <person name="Hoede C."/>
            <person name="Tenaillon O."/>
            <person name="Barbe V."/>
            <person name="Baeriswyl S."/>
            <person name="Bidet P."/>
            <person name="Bingen E."/>
            <person name="Bonacorsi S."/>
            <person name="Bouchier C."/>
            <person name="Bouvet O."/>
            <person name="Calteau A."/>
            <person name="Chiapello H."/>
            <person name="Clermont O."/>
            <person name="Cruveiller S."/>
            <person name="Danchin A."/>
            <person name="Diard M."/>
            <person name="Dossat C."/>
            <person name="Karoui M.E."/>
            <person name="Frapy E."/>
            <person name="Garry L."/>
            <person name="Ghigo J.M."/>
            <person name="Gilles A.M."/>
            <person name="Johnson J."/>
            <person name="Le Bouguenec C."/>
            <person name="Lescat M."/>
            <person name="Mangenot S."/>
            <person name="Martinez-Jehanne V."/>
            <person name="Matic I."/>
            <person name="Nassif X."/>
            <person name="Oztas S."/>
            <person name="Petit M.A."/>
            <person name="Pichon C."/>
            <person name="Rouy Z."/>
            <person name="Ruf C.S."/>
            <person name="Schneider D."/>
            <person name="Tourret J."/>
            <person name="Vacherie B."/>
            <person name="Vallenet D."/>
            <person name="Medigue C."/>
            <person name="Rocha E.P.C."/>
            <person name="Denamur E."/>
        </authorList>
    </citation>
    <scope>NUCLEOTIDE SEQUENCE [LARGE SCALE GENOMIC DNA]</scope>
    <source>
        <strain>S88 / ExPEC</strain>
    </source>
</reference>
<comment type="function">
    <text evidence="1">Component of the tagatose-1,6-bisphosphate aldolase KbaYZ that is required for full activity and stability of the Y subunit. Could have a chaperone-like function for the proper and stable folding of KbaY. When expressed alone, KbaZ does not show any aldolase activity.</text>
</comment>
<comment type="pathway">
    <text evidence="1">Carbohydrate metabolism; D-tagatose 6-phosphate degradation; D-glyceraldehyde 3-phosphate and glycerone phosphate from D-tagatose 6-phosphate: step 2/2.</text>
</comment>
<comment type="subunit">
    <text evidence="1">Forms a complex with KbaY.</text>
</comment>
<comment type="similarity">
    <text evidence="1">Belongs to the GatZ/KbaZ family. KbaZ subfamily.</text>
</comment>
<sequence length="426" mass="47218">MKHLTEMVRQHKAGKTNGIYAVCSAHPLVLEAAIRYASANQTPLLIEATSNQVDQFGGYTGMTPADFRGFVCQLADSLNFPQDALILGGDHLGPNRWQNLPAAQAMANADDLIKSYVAAGFKKIHLDCSMSCQDDPIPLTDDIVAERAARLAKVAEETCREHFGEADLEYVIGTEVPVPGGAHETLSELAVTTPDAARATLEAHRHAFEKQGLNAIWPRIIALVVQPGVEFDHTNVIDYQPAKAAALSQMVENYETLIFEAHSTDYQTPQSLRQLVIDHFAILKVGPALTFALREALFSLAAIEEELVPAKACSGLRQVLENVMLDRPEYWQSHYHGDGNARRLARGYSYSDRVRYYWPDSQIDDAFAHLVRNLADSPIPLPLISQYLPLQYVKVRSGELQPTPRELIINHIQDILAQYHTACEGQ</sequence>
<proteinExistence type="inferred from homology"/>
<protein>
    <recommendedName>
        <fullName evidence="1">D-tagatose-1,6-bisphosphate aldolase subunit KbaZ</fullName>
    </recommendedName>
</protein>
<keyword id="KW-1185">Reference proteome</keyword>
<gene>
    <name evidence="1" type="primary">kbaZ</name>
    <name type="ordered locus">ECS88_3518</name>
</gene>
<feature type="chain" id="PRO_0000372536" description="D-tagatose-1,6-bisphosphate aldolase subunit KbaZ">
    <location>
        <begin position="1"/>
        <end position="426"/>
    </location>
</feature>
<evidence type="ECO:0000255" key="1">
    <source>
        <dbReference type="HAMAP-Rule" id="MF_01295"/>
    </source>
</evidence>